<comment type="function">
    <text evidence="1">Involved in mRNA splicing. Helps to stabilize the U1 snRNP-5' splice site interaction (By similarity).</text>
</comment>
<comment type="subunit">
    <text evidence="1">Associates with snRNPs.</text>
</comment>
<comment type="subcellular location">
    <subcellularLocation>
        <location evidence="1">Nucleus</location>
    </subcellularLocation>
</comment>
<comment type="similarity">
    <text evidence="2">Belongs to the SWT21 family.</text>
</comment>
<name>SWT21_YEAS2</name>
<organism>
    <name type="scientific">Saccharomyces cerevisiae (strain JAY291)</name>
    <name type="common">Baker's yeast</name>
    <dbReference type="NCBI Taxonomy" id="574961"/>
    <lineage>
        <taxon>Eukaryota</taxon>
        <taxon>Fungi</taxon>
        <taxon>Dikarya</taxon>
        <taxon>Ascomycota</taxon>
        <taxon>Saccharomycotina</taxon>
        <taxon>Saccharomycetes</taxon>
        <taxon>Saccharomycetales</taxon>
        <taxon>Saccharomycetaceae</taxon>
        <taxon>Saccharomyces</taxon>
    </lineage>
</organism>
<accession>C7GTF9</accession>
<feature type="chain" id="PRO_0000405687" description="Protein SWT21">
    <location>
        <begin position="1"/>
        <end position="357"/>
    </location>
</feature>
<protein>
    <recommendedName>
        <fullName>Protein SWT21</fullName>
    </recommendedName>
    <alternativeName>
        <fullName>Synthetic With TGS1 protein 21</fullName>
    </alternativeName>
</protein>
<reference key="1">
    <citation type="journal article" date="2009" name="Genome Res.">
        <title>Genome structure of a Saccharomyces cerevisiae strain widely used in bioethanol production.</title>
        <authorList>
            <person name="Argueso J.L."/>
            <person name="Carazzolle M.F."/>
            <person name="Mieczkowski P.A."/>
            <person name="Duarte F.M."/>
            <person name="Netto O.V.C."/>
            <person name="Missawa S.K."/>
            <person name="Galzerani F."/>
            <person name="Costa G.G.L."/>
            <person name="Vidal R.O."/>
            <person name="Noronha M.F."/>
            <person name="Dominska M."/>
            <person name="Andrietta M.G.S."/>
            <person name="Andrietta S.R."/>
            <person name="Cunha A.F."/>
            <person name="Gomes L.H."/>
            <person name="Tavares F.C.A."/>
            <person name="Alcarde A.R."/>
            <person name="Dietrich F.S."/>
            <person name="McCusker J.H."/>
            <person name="Petes T.D."/>
            <person name="Pereira G.A.G."/>
        </authorList>
    </citation>
    <scope>NUCLEOTIDE SEQUENCE [LARGE SCALE GENOMIC DNA]</scope>
    <source>
        <strain>JAY291</strain>
    </source>
</reference>
<sequence>MEKKVICQDIFWSCDGTSFVSVHNDFGIRQYLVPEEGNTDKLNRNLLLPFTRFFRNQSIVSCAIDPFYSLYNENSDRLAGDRIVVGGKNFPLQLYSLMDGQCILSYDTMNKINGEYETVYSVKIDVESRVYTGSCRNKVAIYDKSRRDAVWMNQSTKKASKGRQSIISCFEEQPMGGQALSRGSLLCGSYANEMFQVDCRHQRLERLNYTRTVAGGIVQILTSDNGRYVYVVRRNSDAISIYDRRNLQHELNVLRLPFRIHHNSAKLKAYIDTAYGLSMGTPRGTILNWGRDLVEFGGVPSHNSVEDPLITSIPPESEWRTNLDSTIPATVVKNCPGDPELFALSHGGTISLCRFGG</sequence>
<evidence type="ECO:0000250" key="1"/>
<evidence type="ECO:0000305" key="2"/>
<dbReference type="EMBL" id="ACFL01000260">
    <property type="protein sequence ID" value="EEU05912.1"/>
    <property type="molecule type" value="Genomic_DNA"/>
</dbReference>
<dbReference type="SMR" id="C7GTF9"/>
<dbReference type="OrthoDB" id="38073at4893"/>
<dbReference type="Proteomes" id="UP000008073">
    <property type="component" value="Unassembled WGS sequence"/>
</dbReference>
<dbReference type="GO" id="GO:0005634">
    <property type="term" value="C:nucleus"/>
    <property type="evidence" value="ECO:0007669"/>
    <property type="project" value="UniProtKB-SubCell"/>
</dbReference>
<dbReference type="GO" id="GO:0006397">
    <property type="term" value="P:mRNA processing"/>
    <property type="evidence" value="ECO:0007669"/>
    <property type="project" value="UniProtKB-KW"/>
</dbReference>
<dbReference type="GO" id="GO:0008380">
    <property type="term" value="P:RNA splicing"/>
    <property type="evidence" value="ECO:0007669"/>
    <property type="project" value="UniProtKB-KW"/>
</dbReference>
<dbReference type="Gene3D" id="2.130.10.10">
    <property type="entry name" value="YVTN repeat-like/Quinoprotein amine dehydrogenase"/>
    <property type="match status" value="1"/>
</dbReference>
<dbReference type="InterPro" id="IPR051150">
    <property type="entry name" value="SWT21/TCAB1_mRNA_Telomere"/>
</dbReference>
<dbReference type="InterPro" id="IPR015943">
    <property type="entry name" value="WD40/YVTN_repeat-like_dom_sf"/>
</dbReference>
<dbReference type="InterPro" id="IPR036322">
    <property type="entry name" value="WD40_repeat_dom_sf"/>
</dbReference>
<dbReference type="PANTHER" id="PTHR13211">
    <property type="entry name" value="TELOMERASE CAJAL BODY PROTEIN 1"/>
    <property type="match status" value="1"/>
</dbReference>
<dbReference type="PANTHER" id="PTHR13211:SF0">
    <property type="entry name" value="TELOMERASE CAJAL BODY PROTEIN 1"/>
    <property type="match status" value="1"/>
</dbReference>
<dbReference type="SUPFAM" id="SSF50978">
    <property type="entry name" value="WD40 repeat-like"/>
    <property type="match status" value="1"/>
</dbReference>
<keyword id="KW-0507">mRNA processing</keyword>
<keyword id="KW-0508">mRNA splicing</keyword>
<keyword id="KW-0539">Nucleus</keyword>
<gene>
    <name type="primary">SWT21</name>
    <name type="ORF">C1Q_03699</name>
</gene>
<proteinExistence type="inferred from homology"/>